<accession>Q7MAC1</accession>
<protein>
    <recommendedName>
        <fullName evidence="1">UDP-N-acetylglucosamine 1-carboxyvinyltransferase</fullName>
        <ecNumber evidence="1">2.5.1.7</ecNumber>
    </recommendedName>
    <alternativeName>
        <fullName evidence="1">Enoylpyruvate transferase</fullName>
    </alternativeName>
    <alternativeName>
        <fullName evidence="1">UDP-N-acetylglucosamine enolpyruvyl transferase</fullName>
        <shortName evidence="1">EPT</shortName>
    </alternativeName>
</protein>
<comment type="function">
    <text evidence="1">Cell wall formation. Adds enolpyruvyl to UDP-N-acetylglucosamine.</text>
</comment>
<comment type="catalytic activity">
    <reaction evidence="1">
        <text>phosphoenolpyruvate + UDP-N-acetyl-alpha-D-glucosamine = UDP-N-acetyl-3-O-(1-carboxyvinyl)-alpha-D-glucosamine + phosphate</text>
        <dbReference type="Rhea" id="RHEA:18681"/>
        <dbReference type="ChEBI" id="CHEBI:43474"/>
        <dbReference type="ChEBI" id="CHEBI:57705"/>
        <dbReference type="ChEBI" id="CHEBI:58702"/>
        <dbReference type="ChEBI" id="CHEBI:68483"/>
        <dbReference type="EC" id="2.5.1.7"/>
    </reaction>
</comment>
<comment type="pathway">
    <text evidence="1">Cell wall biogenesis; peptidoglycan biosynthesis.</text>
</comment>
<comment type="subcellular location">
    <subcellularLocation>
        <location evidence="1">Cytoplasm</location>
    </subcellularLocation>
</comment>
<comment type="similarity">
    <text evidence="1">Belongs to the EPSP synthase family. MurA subfamily.</text>
</comment>
<evidence type="ECO:0000255" key="1">
    <source>
        <dbReference type="HAMAP-Rule" id="MF_00111"/>
    </source>
</evidence>
<organism>
    <name type="scientific">Wolinella succinogenes (strain ATCC 29543 / DSM 1740 / CCUG 13145 / JCM 31913 / LMG 7466 / NCTC 11488 / FDC 602W)</name>
    <name type="common">Vibrio succinogenes</name>
    <dbReference type="NCBI Taxonomy" id="273121"/>
    <lineage>
        <taxon>Bacteria</taxon>
        <taxon>Pseudomonadati</taxon>
        <taxon>Campylobacterota</taxon>
        <taxon>Epsilonproteobacteria</taxon>
        <taxon>Campylobacterales</taxon>
        <taxon>Helicobacteraceae</taxon>
        <taxon>Wolinella</taxon>
    </lineage>
</organism>
<dbReference type="EC" id="2.5.1.7" evidence="1"/>
<dbReference type="EMBL" id="BX571657">
    <property type="protein sequence ID" value="CAE09492.1"/>
    <property type="molecule type" value="Genomic_DNA"/>
</dbReference>
<dbReference type="RefSeq" id="WP_011138292.1">
    <property type="nucleotide sequence ID" value="NC_005090.1"/>
</dbReference>
<dbReference type="SMR" id="Q7MAC1"/>
<dbReference type="STRING" id="273121.WS0342"/>
<dbReference type="KEGG" id="wsu:WS0342"/>
<dbReference type="eggNOG" id="COG0766">
    <property type="taxonomic scope" value="Bacteria"/>
</dbReference>
<dbReference type="HOGENOM" id="CLU_027387_0_0_7"/>
<dbReference type="UniPathway" id="UPA00219"/>
<dbReference type="Proteomes" id="UP000000422">
    <property type="component" value="Chromosome"/>
</dbReference>
<dbReference type="GO" id="GO:0005737">
    <property type="term" value="C:cytoplasm"/>
    <property type="evidence" value="ECO:0007669"/>
    <property type="project" value="UniProtKB-SubCell"/>
</dbReference>
<dbReference type="GO" id="GO:0008760">
    <property type="term" value="F:UDP-N-acetylglucosamine 1-carboxyvinyltransferase activity"/>
    <property type="evidence" value="ECO:0007669"/>
    <property type="project" value="UniProtKB-UniRule"/>
</dbReference>
<dbReference type="GO" id="GO:0051301">
    <property type="term" value="P:cell division"/>
    <property type="evidence" value="ECO:0007669"/>
    <property type="project" value="UniProtKB-KW"/>
</dbReference>
<dbReference type="GO" id="GO:0071555">
    <property type="term" value="P:cell wall organization"/>
    <property type="evidence" value="ECO:0007669"/>
    <property type="project" value="UniProtKB-KW"/>
</dbReference>
<dbReference type="GO" id="GO:0009252">
    <property type="term" value="P:peptidoglycan biosynthetic process"/>
    <property type="evidence" value="ECO:0007669"/>
    <property type="project" value="UniProtKB-UniRule"/>
</dbReference>
<dbReference type="GO" id="GO:0008360">
    <property type="term" value="P:regulation of cell shape"/>
    <property type="evidence" value="ECO:0007669"/>
    <property type="project" value="UniProtKB-KW"/>
</dbReference>
<dbReference type="GO" id="GO:0019277">
    <property type="term" value="P:UDP-N-acetylgalactosamine biosynthetic process"/>
    <property type="evidence" value="ECO:0007669"/>
    <property type="project" value="InterPro"/>
</dbReference>
<dbReference type="CDD" id="cd01555">
    <property type="entry name" value="UdpNAET"/>
    <property type="match status" value="1"/>
</dbReference>
<dbReference type="FunFam" id="3.65.10.10:FF:000001">
    <property type="entry name" value="UDP-N-acetylglucosamine 1-carboxyvinyltransferase"/>
    <property type="match status" value="1"/>
</dbReference>
<dbReference type="Gene3D" id="3.65.10.10">
    <property type="entry name" value="Enolpyruvate transferase domain"/>
    <property type="match status" value="2"/>
</dbReference>
<dbReference type="HAMAP" id="MF_00111">
    <property type="entry name" value="MurA"/>
    <property type="match status" value="1"/>
</dbReference>
<dbReference type="InterPro" id="IPR001986">
    <property type="entry name" value="Enolpyruvate_Tfrase_dom"/>
</dbReference>
<dbReference type="InterPro" id="IPR036968">
    <property type="entry name" value="Enolpyruvate_Tfrase_sf"/>
</dbReference>
<dbReference type="InterPro" id="IPR050068">
    <property type="entry name" value="MurA_subfamily"/>
</dbReference>
<dbReference type="InterPro" id="IPR013792">
    <property type="entry name" value="RNA3'P_cycl/enolpyr_Trfase_a/b"/>
</dbReference>
<dbReference type="InterPro" id="IPR005750">
    <property type="entry name" value="UDP_GlcNAc_COvinyl_MurA"/>
</dbReference>
<dbReference type="NCBIfam" id="TIGR01072">
    <property type="entry name" value="murA"/>
    <property type="match status" value="1"/>
</dbReference>
<dbReference type="NCBIfam" id="NF006873">
    <property type="entry name" value="PRK09369.1"/>
    <property type="match status" value="1"/>
</dbReference>
<dbReference type="PANTHER" id="PTHR43783">
    <property type="entry name" value="UDP-N-ACETYLGLUCOSAMINE 1-CARBOXYVINYLTRANSFERASE"/>
    <property type="match status" value="1"/>
</dbReference>
<dbReference type="PANTHER" id="PTHR43783:SF1">
    <property type="entry name" value="UDP-N-ACETYLGLUCOSAMINE 1-CARBOXYVINYLTRANSFERASE"/>
    <property type="match status" value="1"/>
</dbReference>
<dbReference type="Pfam" id="PF00275">
    <property type="entry name" value="EPSP_synthase"/>
    <property type="match status" value="1"/>
</dbReference>
<dbReference type="SUPFAM" id="SSF55205">
    <property type="entry name" value="EPT/RTPC-like"/>
    <property type="match status" value="1"/>
</dbReference>
<name>MURA_WOLSU</name>
<reference key="1">
    <citation type="journal article" date="2003" name="Proc. Natl. Acad. Sci. U.S.A.">
        <title>Complete genome sequence and analysis of Wolinella succinogenes.</title>
        <authorList>
            <person name="Baar C."/>
            <person name="Eppinger M."/>
            <person name="Raddatz G."/>
            <person name="Simon J."/>
            <person name="Lanz C."/>
            <person name="Klimmek O."/>
            <person name="Nandakumar R."/>
            <person name="Gross R."/>
            <person name="Rosinus A."/>
            <person name="Keller H."/>
            <person name="Jagtap P."/>
            <person name="Linke B."/>
            <person name="Meyer F."/>
            <person name="Lederer H."/>
            <person name="Schuster S.C."/>
        </authorList>
    </citation>
    <scope>NUCLEOTIDE SEQUENCE [LARGE SCALE GENOMIC DNA]</scope>
    <source>
        <strain>ATCC 29543 / DSM 1740 / CCUG 13145 / JCM 31913 / LMG 7466 / NCTC 11488 / FDC 602W</strain>
    </source>
</reference>
<sequence>MDFLSITGGEKLQGSVSVSGAKNAALPLISATLLAKNEACLKNLPDVVDIKTLLSLLEMLGAKVQRIDPHTVKVNSSEILSTKATYDIVRKMRASILVLGPLLSRFGKCEVSLPGGCAIGARPVDLHLKAMEKMGAIVEIKGGYIVANAPKGLKGATIAFDKITVTGTENVVMAAALAKGVTKILNAAQEPEVVQLCEVLQAAGVEIKGIGSNELEIVGQEGEALEFKEVEVIPDRIEAGTYLCAGAMTNSSIRLERVVPEHLSAVTQKLEEIGFGIEYGENHLTLLPASKRRAFEIITTEYPGFPTDMQAQFMALATQCEGASIIEERLFENRFMHVSELQRLGAGIHLRGNTATVNGGTKLLCADVMATDLRASSALVLAALAAEGTTNIHRIYHLDRGYERLEEKLRALGAVIERGRE</sequence>
<gene>
    <name evidence="1" type="primary">murA</name>
    <name type="ordered locus">WS0342</name>
</gene>
<proteinExistence type="inferred from homology"/>
<feature type="chain" id="PRO_0000231300" description="UDP-N-acetylglucosamine 1-carboxyvinyltransferase">
    <location>
        <begin position="1"/>
        <end position="421"/>
    </location>
</feature>
<feature type="active site" description="Proton donor" evidence="1">
    <location>
        <position position="117"/>
    </location>
</feature>
<feature type="binding site" evidence="1">
    <location>
        <begin position="22"/>
        <end position="23"/>
    </location>
    <ligand>
        <name>phosphoenolpyruvate</name>
        <dbReference type="ChEBI" id="CHEBI:58702"/>
    </ligand>
</feature>
<feature type="binding site" evidence="1">
    <location>
        <position position="93"/>
    </location>
    <ligand>
        <name>UDP-N-acetyl-alpha-D-glucosamine</name>
        <dbReference type="ChEBI" id="CHEBI:57705"/>
    </ligand>
</feature>
<feature type="binding site" evidence="1">
    <location>
        <begin position="122"/>
        <end position="126"/>
    </location>
    <ligand>
        <name>UDP-N-acetyl-alpha-D-glucosamine</name>
        <dbReference type="ChEBI" id="CHEBI:57705"/>
    </ligand>
</feature>
<feature type="binding site" evidence="1">
    <location>
        <position position="308"/>
    </location>
    <ligand>
        <name>UDP-N-acetyl-alpha-D-glucosamine</name>
        <dbReference type="ChEBI" id="CHEBI:57705"/>
    </ligand>
</feature>
<feature type="binding site" evidence="1">
    <location>
        <position position="330"/>
    </location>
    <ligand>
        <name>UDP-N-acetyl-alpha-D-glucosamine</name>
        <dbReference type="ChEBI" id="CHEBI:57705"/>
    </ligand>
</feature>
<feature type="modified residue" description="2-(S-cysteinyl)pyruvic acid O-phosphothioketal" evidence="1">
    <location>
        <position position="117"/>
    </location>
</feature>
<keyword id="KW-0131">Cell cycle</keyword>
<keyword id="KW-0132">Cell division</keyword>
<keyword id="KW-0133">Cell shape</keyword>
<keyword id="KW-0961">Cell wall biogenesis/degradation</keyword>
<keyword id="KW-0963">Cytoplasm</keyword>
<keyword id="KW-0573">Peptidoglycan synthesis</keyword>
<keyword id="KW-0670">Pyruvate</keyword>
<keyword id="KW-1185">Reference proteome</keyword>
<keyword id="KW-0808">Transferase</keyword>